<proteinExistence type="inferred from homology"/>
<reference key="1">
    <citation type="journal article" date="1998" name="Nature">
        <title>The complete genome of the hyperthermophilic bacterium Aquifex aeolicus.</title>
        <authorList>
            <person name="Deckert G."/>
            <person name="Warren P.V."/>
            <person name="Gaasterland T."/>
            <person name="Young W.G."/>
            <person name="Lenox A.L."/>
            <person name="Graham D.E."/>
            <person name="Overbeek R."/>
            <person name="Snead M.A."/>
            <person name="Keller M."/>
            <person name="Aujay M."/>
            <person name="Huber R."/>
            <person name="Feldman R.A."/>
            <person name="Short J.M."/>
            <person name="Olsen G.J."/>
            <person name="Swanson R.V."/>
        </authorList>
    </citation>
    <scope>NUCLEOTIDE SEQUENCE [LARGE SCALE GENOMIC DNA]</scope>
    <source>
        <strain>VF5</strain>
    </source>
</reference>
<protein>
    <recommendedName>
        <fullName evidence="1">Succinate--CoA ligase [ADP-forming] subunit alpha</fullName>
        <ecNumber evidence="1">6.2.1.5</ecNumber>
    </recommendedName>
    <alternativeName>
        <fullName evidence="1">Succinyl-CoA synthetase subunit alpha</fullName>
        <shortName evidence="1">SCS-alpha</shortName>
    </alternativeName>
</protein>
<keyword id="KW-0436">Ligase</keyword>
<keyword id="KW-0547">Nucleotide-binding</keyword>
<keyword id="KW-1185">Reference proteome</keyword>
<keyword id="KW-0816">Tricarboxylic acid cycle</keyword>
<comment type="function">
    <text evidence="1">Succinyl-CoA synthetase functions in the citric acid cycle (TCA), coupling the hydrolysis of succinyl-CoA to the synthesis of either ATP or GTP and thus represents the only step of substrate-level phosphorylation in the TCA. The alpha subunit of the enzyme binds the substrates coenzyme A and phosphate, while succinate binding and nucleotide specificity is provided by the beta subunit.</text>
</comment>
<comment type="catalytic activity">
    <reaction evidence="1">
        <text>succinate + ATP + CoA = succinyl-CoA + ADP + phosphate</text>
        <dbReference type="Rhea" id="RHEA:17661"/>
        <dbReference type="ChEBI" id="CHEBI:30031"/>
        <dbReference type="ChEBI" id="CHEBI:30616"/>
        <dbReference type="ChEBI" id="CHEBI:43474"/>
        <dbReference type="ChEBI" id="CHEBI:57287"/>
        <dbReference type="ChEBI" id="CHEBI:57292"/>
        <dbReference type="ChEBI" id="CHEBI:456216"/>
        <dbReference type="EC" id="6.2.1.5"/>
    </reaction>
    <physiologicalReaction direction="right-to-left" evidence="1">
        <dbReference type="Rhea" id="RHEA:17663"/>
    </physiologicalReaction>
</comment>
<comment type="catalytic activity">
    <reaction evidence="1">
        <text>GTP + succinate + CoA = succinyl-CoA + GDP + phosphate</text>
        <dbReference type="Rhea" id="RHEA:22120"/>
        <dbReference type="ChEBI" id="CHEBI:30031"/>
        <dbReference type="ChEBI" id="CHEBI:37565"/>
        <dbReference type="ChEBI" id="CHEBI:43474"/>
        <dbReference type="ChEBI" id="CHEBI:57287"/>
        <dbReference type="ChEBI" id="CHEBI:57292"/>
        <dbReference type="ChEBI" id="CHEBI:58189"/>
    </reaction>
    <physiologicalReaction direction="right-to-left" evidence="1">
        <dbReference type="Rhea" id="RHEA:22122"/>
    </physiologicalReaction>
</comment>
<comment type="pathway">
    <text evidence="1">Carbohydrate metabolism; tricarboxylic acid cycle; succinate from succinyl-CoA (ligase route): step 1/1.</text>
</comment>
<comment type="subunit">
    <text evidence="1">Heterotetramer of two alpha and two beta subunits.</text>
</comment>
<comment type="similarity">
    <text evidence="1">Belongs to the succinate/malate CoA ligase alpha subunit family.</text>
</comment>
<evidence type="ECO:0000255" key="1">
    <source>
        <dbReference type="HAMAP-Rule" id="MF_01988"/>
    </source>
</evidence>
<sequence>MAILVNKDTKVVVQGITGKEGSFHAKQCKEYGTQVVAGVTPGKGGMEVEGIPVFNTVKEAVKETGANCSLIFVPAPFAADAIVEALDAGIELVVCITEGIPVKDMMMVKDYMLKNYPNAKLVGPNCPGVITPGEAKVGIMPGHIFKRGKIGIVSRSGTLTYEAAYQLTKYGLGQSTAVGIGGDPVHGLTHRDVIEMFNKDPETEAILMIGEIGGTEEEEAAEYIEKEVDKPVFAYIAGITAPPGKRMGHAGAIIMGGKGTAKAKMEALEKAGAYVIENPAKIGETVAKILKVIELEEEERTSDAE</sequence>
<name>SUCD_AQUAE</name>
<gene>
    <name evidence="1" type="primary">sucD</name>
    <name type="ordered locus">aq_1622</name>
</gene>
<organism>
    <name type="scientific">Aquifex aeolicus (strain VF5)</name>
    <dbReference type="NCBI Taxonomy" id="224324"/>
    <lineage>
        <taxon>Bacteria</taxon>
        <taxon>Pseudomonadati</taxon>
        <taxon>Aquificota</taxon>
        <taxon>Aquificia</taxon>
        <taxon>Aquificales</taxon>
        <taxon>Aquificaceae</taxon>
        <taxon>Aquifex</taxon>
    </lineage>
</organism>
<feature type="chain" id="PRO_0000102788" description="Succinate--CoA ligase [ADP-forming] subunit alpha">
    <location>
        <begin position="1"/>
        <end position="305"/>
    </location>
</feature>
<feature type="active site" description="Tele-phosphohistidine intermediate" evidence="1">
    <location>
        <position position="249"/>
    </location>
</feature>
<feature type="binding site" evidence="1">
    <location>
        <begin position="17"/>
        <end position="20"/>
    </location>
    <ligand>
        <name>CoA</name>
        <dbReference type="ChEBI" id="CHEBI:57287"/>
    </ligand>
</feature>
<feature type="binding site" evidence="1">
    <location>
        <position position="43"/>
    </location>
    <ligand>
        <name>CoA</name>
        <dbReference type="ChEBI" id="CHEBI:57287"/>
    </ligand>
</feature>
<feature type="binding site" evidence="1">
    <location>
        <begin position="96"/>
        <end position="98"/>
    </location>
    <ligand>
        <name>CoA</name>
        <dbReference type="ChEBI" id="CHEBI:57287"/>
    </ligand>
</feature>
<feature type="binding site" evidence="1">
    <location>
        <position position="161"/>
    </location>
    <ligand>
        <name>substrate</name>
        <note>ligand shared with subunit beta</note>
    </ligand>
</feature>
<dbReference type="EC" id="6.2.1.5" evidence="1"/>
<dbReference type="EMBL" id="AE000657">
    <property type="protein sequence ID" value="AAC07509.1"/>
    <property type="molecule type" value="Genomic_DNA"/>
</dbReference>
<dbReference type="PIR" id="A70440">
    <property type="entry name" value="A70440"/>
</dbReference>
<dbReference type="RefSeq" id="NP_214112.1">
    <property type="nucleotide sequence ID" value="NC_000918.1"/>
</dbReference>
<dbReference type="RefSeq" id="WP_010881050.1">
    <property type="nucleotide sequence ID" value="NC_000918.1"/>
</dbReference>
<dbReference type="SMR" id="O67547"/>
<dbReference type="FunCoup" id="O67547">
    <property type="interactions" value="428"/>
</dbReference>
<dbReference type="STRING" id="224324.aq_1622"/>
<dbReference type="EnsemblBacteria" id="AAC07509">
    <property type="protein sequence ID" value="AAC07509"/>
    <property type="gene ID" value="aq_1622"/>
</dbReference>
<dbReference type="KEGG" id="aae:aq_1622"/>
<dbReference type="PATRIC" id="fig|224324.8.peg.1250"/>
<dbReference type="eggNOG" id="COG0074">
    <property type="taxonomic scope" value="Bacteria"/>
</dbReference>
<dbReference type="HOGENOM" id="CLU_052104_0_0_0"/>
<dbReference type="InParanoid" id="O67547"/>
<dbReference type="OrthoDB" id="9807196at2"/>
<dbReference type="UniPathway" id="UPA00223">
    <property type="reaction ID" value="UER00999"/>
</dbReference>
<dbReference type="Proteomes" id="UP000000798">
    <property type="component" value="Chromosome"/>
</dbReference>
<dbReference type="GO" id="GO:0009361">
    <property type="term" value="C:succinate-CoA ligase complex (ADP-forming)"/>
    <property type="evidence" value="ECO:0000318"/>
    <property type="project" value="GO_Central"/>
</dbReference>
<dbReference type="GO" id="GO:0000166">
    <property type="term" value="F:nucleotide binding"/>
    <property type="evidence" value="ECO:0007669"/>
    <property type="project" value="UniProtKB-KW"/>
</dbReference>
<dbReference type="GO" id="GO:0004775">
    <property type="term" value="F:succinate-CoA ligase (ADP-forming) activity"/>
    <property type="evidence" value="ECO:0000318"/>
    <property type="project" value="GO_Central"/>
</dbReference>
<dbReference type="GO" id="GO:0004776">
    <property type="term" value="F:succinate-CoA ligase (GDP-forming) activity"/>
    <property type="evidence" value="ECO:0000318"/>
    <property type="project" value="GO_Central"/>
</dbReference>
<dbReference type="GO" id="GO:0006099">
    <property type="term" value="P:tricarboxylic acid cycle"/>
    <property type="evidence" value="ECO:0000318"/>
    <property type="project" value="GO_Central"/>
</dbReference>
<dbReference type="FunFam" id="3.40.50.261:FF:000006">
    <property type="entry name" value="Succinate--CoA ligase [ADP-forming] subunit alpha"/>
    <property type="match status" value="1"/>
</dbReference>
<dbReference type="FunFam" id="3.40.50.720:FF:000277">
    <property type="entry name" value="Succinate--CoA ligase [ADP-forming] subunit alpha"/>
    <property type="match status" value="1"/>
</dbReference>
<dbReference type="Gene3D" id="3.40.50.720">
    <property type="entry name" value="NAD(P)-binding Rossmann-like Domain"/>
    <property type="match status" value="1"/>
</dbReference>
<dbReference type="Gene3D" id="3.40.50.261">
    <property type="entry name" value="Succinyl-CoA synthetase domains"/>
    <property type="match status" value="1"/>
</dbReference>
<dbReference type="HAMAP" id="MF_01988">
    <property type="entry name" value="Succ_CoA_alpha"/>
    <property type="match status" value="1"/>
</dbReference>
<dbReference type="InterPro" id="IPR017440">
    <property type="entry name" value="Cit_synth/succinyl-CoA_lig_AS"/>
</dbReference>
<dbReference type="InterPro" id="IPR033847">
    <property type="entry name" value="Citrt_syn/SCS-alpha_CS"/>
</dbReference>
<dbReference type="InterPro" id="IPR003781">
    <property type="entry name" value="CoA-bd"/>
</dbReference>
<dbReference type="InterPro" id="IPR005810">
    <property type="entry name" value="CoA_lig_alpha"/>
</dbReference>
<dbReference type="InterPro" id="IPR036291">
    <property type="entry name" value="NAD(P)-bd_dom_sf"/>
</dbReference>
<dbReference type="InterPro" id="IPR005811">
    <property type="entry name" value="SUCC_ACL_C"/>
</dbReference>
<dbReference type="InterPro" id="IPR016102">
    <property type="entry name" value="Succinyl-CoA_synth-like"/>
</dbReference>
<dbReference type="NCBIfam" id="NF004230">
    <property type="entry name" value="PRK05678.1"/>
    <property type="match status" value="1"/>
</dbReference>
<dbReference type="NCBIfam" id="TIGR01019">
    <property type="entry name" value="sucCoAalpha"/>
    <property type="match status" value="1"/>
</dbReference>
<dbReference type="PANTHER" id="PTHR11117:SF2">
    <property type="entry name" value="SUCCINATE--COA LIGASE [ADP_GDP-FORMING] SUBUNIT ALPHA, MITOCHONDRIAL"/>
    <property type="match status" value="1"/>
</dbReference>
<dbReference type="PANTHER" id="PTHR11117">
    <property type="entry name" value="SUCCINYL-COA LIGASE SUBUNIT ALPHA"/>
    <property type="match status" value="1"/>
</dbReference>
<dbReference type="Pfam" id="PF02629">
    <property type="entry name" value="CoA_binding"/>
    <property type="match status" value="1"/>
</dbReference>
<dbReference type="Pfam" id="PF00549">
    <property type="entry name" value="Ligase_CoA"/>
    <property type="match status" value="1"/>
</dbReference>
<dbReference type="PIRSF" id="PIRSF001553">
    <property type="entry name" value="SucCS_alpha"/>
    <property type="match status" value="1"/>
</dbReference>
<dbReference type="PRINTS" id="PR01798">
    <property type="entry name" value="SCOASYNTHASE"/>
</dbReference>
<dbReference type="SMART" id="SM00881">
    <property type="entry name" value="CoA_binding"/>
    <property type="match status" value="1"/>
</dbReference>
<dbReference type="SUPFAM" id="SSF51735">
    <property type="entry name" value="NAD(P)-binding Rossmann-fold domains"/>
    <property type="match status" value="1"/>
</dbReference>
<dbReference type="SUPFAM" id="SSF52210">
    <property type="entry name" value="Succinyl-CoA synthetase domains"/>
    <property type="match status" value="1"/>
</dbReference>
<dbReference type="PROSITE" id="PS01216">
    <property type="entry name" value="SUCCINYL_COA_LIG_1"/>
    <property type="match status" value="1"/>
</dbReference>
<dbReference type="PROSITE" id="PS00399">
    <property type="entry name" value="SUCCINYL_COA_LIG_2"/>
    <property type="match status" value="1"/>
</dbReference>
<accession>O67547</accession>